<accession>A5YC49</accession>
<organism>
    <name type="scientific">Xenopus laevis</name>
    <name type="common">African clawed frog</name>
    <dbReference type="NCBI Taxonomy" id="8355"/>
    <lineage>
        <taxon>Eukaryota</taxon>
        <taxon>Metazoa</taxon>
        <taxon>Chordata</taxon>
        <taxon>Craniata</taxon>
        <taxon>Vertebrata</taxon>
        <taxon>Euteleostomi</taxon>
        <taxon>Amphibia</taxon>
        <taxon>Batrachia</taxon>
        <taxon>Anura</taxon>
        <taxon>Pipoidea</taxon>
        <taxon>Pipidae</taxon>
        <taxon>Xenopodinae</taxon>
        <taxon>Xenopus</taxon>
        <taxon>Xenopus</taxon>
    </lineage>
</organism>
<gene>
    <name type="primary">nkx6-3</name>
</gene>
<sequence>METHHPGAFLLPSYSEMKSSGCQFPTHTPFHKLNPSVLGCHLPSGTPHCISDILSRPLPASHSGMFPGYPTVQGYGSSSVPGTCYGEQGNILTKSGTPYTNQSQGGWTDIEQDWRGGNPALSSASNTEGSSRKKHTRPTFTGHQIFALEKTFEQTKYLAGPERARLAFSLGMSESQVKVWFQNRRTKWRKKSAVETPGLPSLSTRAPGDLIPSDNEDDEYSKPLDPDSDDEKIRLLLRKHRAAFSVLSLASHNL</sequence>
<protein>
    <recommendedName>
        <fullName>Homeobox protein Nkx-6.3</fullName>
    </recommendedName>
</protein>
<name>NKX63_XENLA</name>
<proteinExistence type="evidence at transcript level"/>
<evidence type="ECO:0000250" key="1"/>
<evidence type="ECO:0000255" key="2">
    <source>
        <dbReference type="PROSITE-ProRule" id="PRU00108"/>
    </source>
</evidence>
<evidence type="ECO:0000256" key="3">
    <source>
        <dbReference type="SAM" id="MobiDB-lite"/>
    </source>
</evidence>
<evidence type="ECO:0000269" key="4">
    <source>
    </source>
</evidence>
<keyword id="KW-0238">DNA-binding</keyword>
<keyword id="KW-0371">Homeobox</keyword>
<keyword id="KW-0539">Nucleus</keyword>
<keyword id="KW-1185">Reference proteome</keyword>
<keyword id="KW-0804">Transcription</keyword>
<keyword id="KW-0805">Transcription regulation</keyword>
<dbReference type="EMBL" id="EF460790">
    <property type="protein sequence ID" value="ABQ86051.1"/>
    <property type="molecule type" value="mRNA"/>
</dbReference>
<dbReference type="RefSeq" id="NP_001093371.1">
    <property type="nucleotide sequence ID" value="NM_001099901.1"/>
</dbReference>
<dbReference type="SMR" id="A5YC49"/>
<dbReference type="GeneID" id="100101319"/>
<dbReference type="KEGG" id="xla:100101319"/>
<dbReference type="AGR" id="Xenbase:XB-GENE-865197"/>
<dbReference type="CTD" id="100101319"/>
<dbReference type="Xenbase" id="XB-GENE-865197">
    <property type="gene designation" value="nkx6-3.L"/>
</dbReference>
<dbReference type="OrthoDB" id="6159439at2759"/>
<dbReference type="Proteomes" id="UP000186698">
    <property type="component" value="Chromosome 3L"/>
</dbReference>
<dbReference type="Bgee" id="100101319">
    <property type="expression patterns" value="Expressed in intestine and 1 other cell type or tissue"/>
</dbReference>
<dbReference type="GO" id="GO:0005634">
    <property type="term" value="C:nucleus"/>
    <property type="evidence" value="ECO:0000318"/>
    <property type="project" value="GO_Central"/>
</dbReference>
<dbReference type="GO" id="GO:0000981">
    <property type="term" value="F:DNA-binding transcription factor activity, RNA polymerase II-specific"/>
    <property type="evidence" value="ECO:0000318"/>
    <property type="project" value="GO_Central"/>
</dbReference>
<dbReference type="GO" id="GO:0000978">
    <property type="term" value="F:RNA polymerase II cis-regulatory region sequence-specific DNA binding"/>
    <property type="evidence" value="ECO:0000318"/>
    <property type="project" value="GO_Central"/>
</dbReference>
<dbReference type="GO" id="GO:0030154">
    <property type="term" value="P:cell differentiation"/>
    <property type="evidence" value="ECO:0000318"/>
    <property type="project" value="GO_Central"/>
</dbReference>
<dbReference type="GO" id="GO:0006357">
    <property type="term" value="P:regulation of transcription by RNA polymerase II"/>
    <property type="evidence" value="ECO:0000318"/>
    <property type="project" value="GO_Central"/>
</dbReference>
<dbReference type="CDD" id="cd00086">
    <property type="entry name" value="homeodomain"/>
    <property type="match status" value="1"/>
</dbReference>
<dbReference type="FunFam" id="1.10.10.60:FF:000067">
    <property type="entry name" value="NK6 homeobox 1"/>
    <property type="match status" value="1"/>
</dbReference>
<dbReference type="Gene3D" id="1.10.10.60">
    <property type="entry name" value="Homeodomain-like"/>
    <property type="match status" value="1"/>
</dbReference>
<dbReference type="InterPro" id="IPR001356">
    <property type="entry name" value="HD"/>
</dbReference>
<dbReference type="InterPro" id="IPR020479">
    <property type="entry name" value="HD_metazoa"/>
</dbReference>
<dbReference type="InterPro" id="IPR017970">
    <property type="entry name" value="Homeobox_CS"/>
</dbReference>
<dbReference type="InterPro" id="IPR050394">
    <property type="entry name" value="Homeobox_NK-like"/>
</dbReference>
<dbReference type="InterPro" id="IPR009057">
    <property type="entry name" value="Homeodomain-like_sf"/>
</dbReference>
<dbReference type="InterPro" id="IPR000047">
    <property type="entry name" value="HTH_motif"/>
</dbReference>
<dbReference type="PANTHER" id="PTHR24340">
    <property type="entry name" value="HOMEOBOX PROTEIN NKX"/>
    <property type="match status" value="1"/>
</dbReference>
<dbReference type="PANTHER" id="PTHR24340:SF108">
    <property type="entry name" value="HOMEOBOX PROTEIN NKX-6.3"/>
    <property type="match status" value="1"/>
</dbReference>
<dbReference type="Pfam" id="PF00046">
    <property type="entry name" value="Homeodomain"/>
    <property type="match status" value="1"/>
</dbReference>
<dbReference type="PRINTS" id="PR00024">
    <property type="entry name" value="HOMEOBOX"/>
</dbReference>
<dbReference type="PRINTS" id="PR00031">
    <property type="entry name" value="HTHREPRESSR"/>
</dbReference>
<dbReference type="SMART" id="SM00389">
    <property type="entry name" value="HOX"/>
    <property type="match status" value="1"/>
</dbReference>
<dbReference type="SUPFAM" id="SSF46689">
    <property type="entry name" value="Homeodomain-like"/>
    <property type="match status" value="1"/>
</dbReference>
<dbReference type="PROSITE" id="PS00027">
    <property type="entry name" value="HOMEOBOX_1"/>
    <property type="match status" value="1"/>
</dbReference>
<dbReference type="PROSITE" id="PS50071">
    <property type="entry name" value="HOMEOBOX_2"/>
    <property type="match status" value="1"/>
</dbReference>
<feature type="chain" id="PRO_0000311332" description="Homeobox protein Nkx-6.3">
    <location>
        <begin position="1"/>
        <end position="254"/>
    </location>
</feature>
<feature type="DNA-binding region" description="Homeobox" evidence="2">
    <location>
        <begin position="133"/>
        <end position="192"/>
    </location>
</feature>
<feature type="region of interest" description="Disordered" evidence="3">
    <location>
        <begin position="112"/>
        <end position="140"/>
    </location>
</feature>
<feature type="region of interest" description="Disordered" evidence="3">
    <location>
        <begin position="191"/>
        <end position="228"/>
    </location>
</feature>
<feature type="compositionally biased region" description="Polar residues" evidence="3">
    <location>
        <begin position="120"/>
        <end position="129"/>
    </location>
</feature>
<reference key="1">
    <citation type="journal article" date="2007" name="Dev. Genes Evol.">
        <title>Cloning and developmental expression of the Xenopus Nkx6 genes.</title>
        <authorList>
            <person name="Zhao S."/>
            <person name="Jiang H."/>
            <person name="Wang W."/>
            <person name="Mao B."/>
        </authorList>
    </citation>
    <scope>NUCLEOTIDE SEQUENCE [MRNA]</scope>
    <scope>DEVELOPMENTAL STAGE</scope>
</reference>
<comment type="function">
    <text evidence="1">Putative transcription factor, which may be involved in patterning of central nervous system and pancreas.</text>
</comment>
<comment type="subcellular location">
    <subcellularLocation>
        <location evidence="2">Nucleus</location>
    </subcellularLocation>
</comment>
<comment type="developmental stage">
    <text evidence="4">Detected in the non-neural ectoderm from cleavage to early neurula stages and in the caudal hindbrain and the mandibular arch at tail bud stages.</text>
</comment>